<dbReference type="EMBL" id="AY338464">
    <property type="protein sequence ID" value="AAR08419.1"/>
    <property type="status" value="ALT_FRAME"/>
    <property type="molecule type" value="mRNA"/>
</dbReference>
<dbReference type="EMBL" id="AK142391">
    <property type="protein sequence ID" value="BAE25053.1"/>
    <property type="molecule type" value="mRNA"/>
</dbReference>
<dbReference type="EMBL" id="AK162842">
    <property type="protein sequence ID" value="BAE37076.1"/>
    <property type="molecule type" value="mRNA"/>
</dbReference>
<dbReference type="EMBL" id="AK122419">
    <property type="protein sequence ID" value="BAC65701.1"/>
    <property type="molecule type" value="mRNA"/>
</dbReference>
<dbReference type="EMBL" id="BC052320">
    <property type="protein sequence ID" value="AAH52320.1"/>
    <property type="molecule type" value="mRNA"/>
</dbReference>
<dbReference type="CCDS" id="CCDS57375.1"/>
<dbReference type="RefSeq" id="NP_766012.3">
    <property type="nucleotide sequence ID" value="NM_172424.4"/>
</dbReference>
<dbReference type="SMR" id="Q6JPI3"/>
<dbReference type="BioGRID" id="218020">
    <property type="interactions" value="10"/>
</dbReference>
<dbReference type="FunCoup" id="Q6JPI3">
    <property type="interactions" value="2578"/>
</dbReference>
<dbReference type="STRING" id="10090.ENSMUSP00000144092"/>
<dbReference type="GlyGen" id="Q6JPI3">
    <property type="glycosylation" value="2 sites"/>
</dbReference>
<dbReference type="iPTMnet" id="Q6JPI3"/>
<dbReference type="PhosphoSitePlus" id="Q6JPI3"/>
<dbReference type="jPOST" id="Q6JPI3"/>
<dbReference type="PaxDb" id="10090-ENSMUSP00000098379"/>
<dbReference type="ProteomicsDB" id="252756"/>
<dbReference type="Pumba" id="Q6JPI3"/>
<dbReference type="DNASU" id="76199"/>
<dbReference type="GeneID" id="76199"/>
<dbReference type="KEGG" id="mmu:76199"/>
<dbReference type="AGR" id="MGI:2670178"/>
<dbReference type="CTD" id="23389"/>
<dbReference type="MGI" id="MGI:2670178">
    <property type="gene designation" value="Med13l"/>
</dbReference>
<dbReference type="eggNOG" id="KOG3600">
    <property type="taxonomic scope" value="Eukaryota"/>
</dbReference>
<dbReference type="InParanoid" id="Q6JPI3"/>
<dbReference type="OrthoDB" id="103819at2759"/>
<dbReference type="PhylomeDB" id="Q6JPI3"/>
<dbReference type="BioGRID-ORCS" id="76199">
    <property type="hits" value="6 hits in 77 CRISPR screens"/>
</dbReference>
<dbReference type="ChiTaRS" id="Med13l">
    <property type="organism name" value="mouse"/>
</dbReference>
<dbReference type="PRO" id="PR:Q6JPI3"/>
<dbReference type="Proteomes" id="UP000000589">
    <property type="component" value="Unplaced"/>
</dbReference>
<dbReference type="RNAct" id="Q6JPI3">
    <property type="molecule type" value="protein"/>
</dbReference>
<dbReference type="GO" id="GO:0016592">
    <property type="term" value="C:mediator complex"/>
    <property type="evidence" value="ECO:0000314"/>
    <property type="project" value="MGI"/>
</dbReference>
<dbReference type="GO" id="GO:0005654">
    <property type="term" value="C:nucleoplasm"/>
    <property type="evidence" value="ECO:0000304"/>
    <property type="project" value="Reactome"/>
</dbReference>
<dbReference type="GO" id="GO:0003712">
    <property type="term" value="F:transcription coregulator activity"/>
    <property type="evidence" value="ECO:0007669"/>
    <property type="project" value="InterPro"/>
</dbReference>
<dbReference type="GO" id="GO:0006357">
    <property type="term" value="P:regulation of transcription by RNA polymerase II"/>
    <property type="evidence" value="ECO:0007669"/>
    <property type="project" value="InterPro"/>
</dbReference>
<dbReference type="GO" id="GO:0006366">
    <property type="term" value="P:transcription by RNA polymerase II"/>
    <property type="evidence" value="ECO:0000305"/>
    <property type="project" value="MGI"/>
</dbReference>
<dbReference type="InterPro" id="IPR009401">
    <property type="entry name" value="Med13_C"/>
</dbReference>
<dbReference type="InterPro" id="IPR051139">
    <property type="entry name" value="Mediator_complx_sub13"/>
</dbReference>
<dbReference type="InterPro" id="IPR021643">
    <property type="entry name" value="Mediator_Med13_N"/>
</dbReference>
<dbReference type="InterPro" id="IPR041285">
    <property type="entry name" value="MID_MedPIWI"/>
</dbReference>
<dbReference type="PANTHER" id="PTHR48249">
    <property type="entry name" value="MEDIATOR OF RNA POLYMERASE II TRANSCRIPTION SUBUNIT 13"/>
    <property type="match status" value="1"/>
</dbReference>
<dbReference type="PANTHER" id="PTHR48249:SF1">
    <property type="entry name" value="MEDIATOR OF RNA POLYMERASE II TRANSCRIPTION SUBUNIT 13-LIKE"/>
    <property type="match status" value="1"/>
</dbReference>
<dbReference type="Pfam" id="PF06333">
    <property type="entry name" value="Med13_C"/>
    <property type="match status" value="1"/>
</dbReference>
<dbReference type="Pfam" id="PF11597">
    <property type="entry name" value="Med13_N"/>
    <property type="match status" value="1"/>
</dbReference>
<dbReference type="Pfam" id="PF18296">
    <property type="entry name" value="MID_MedPIWI"/>
    <property type="match status" value="1"/>
</dbReference>
<organism>
    <name type="scientific">Mus musculus</name>
    <name type="common">Mouse</name>
    <dbReference type="NCBI Taxonomy" id="10090"/>
    <lineage>
        <taxon>Eukaryota</taxon>
        <taxon>Metazoa</taxon>
        <taxon>Chordata</taxon>
        <taxon>Craniata</taxon>
        <taxon>Vertebrata</taxon>
        <taxon>Euteleostomi</taxon>
        <taxon>Mammalia</taxon>
        <taxon>Eutheria</taxon>
        <taxon>Euarchontoglires</taxon>
        <taxon>Glires</taxon>
        <taxon>Rodentia</taxon>
        <taxon>Myomorpha</taxon>
        <taxon>Muroidea</taxon>
        <taxon>Muridae</taxon>
        <taxon>Murinae</taxon>
        <taxon>Mus</taxon>
        <taxon>Mus</taxon>
    </lineage>
</organism>
<comment type="function">
    <text evidence="1">Component of the Mediator complex, a coactivator involved in the regulated transcription of nearly all RNA polymerase II-dependent genes. Mediator functions as a bridge to convey information from gene-specific regulatory proteins to the basal RNA polymerase II transcription machinery. Mediator is recruited to promoters by direct interactions with regulatory proteins and serves as a scaffold for the assembly of a functional preinitiation complex with RNA polymerase II and the general transcription factors. This subunit may specifically regulate transcription of targets of the Wnt signaling pathway and SHH signaling pathway (By similarity).</text>
</comment>
<comment type="subunit">
    <text evidence="1">Component of the Mediator complex, which is composed of MED1, MED4, MED6, MED7, MED8, MED9, MED10, MED11, MED12, MED13, MED13L, MED14, MED15, MED16, MED17, MED18, MED19, MED20, MED21, MED22, MED23, MED24, MED25, MED26, MED27, MED29, MED30, MED31, CCNC, CDK8 and CDC2L6/CDK11. The MED12, MED13, CCNC and CDK8 subunits form a distinct module termed the CDK8 module. Mediator containing the CDK8 module is less active than Mediator lacking this module in supporting transcriptional activation. Individual preparations of the Mediator complex lacking one or more distinct subunits have been variously termed ARC, CRSP, DRIP, PC2, SMCC and TRAP (By similarity).</text>
</comment>
<comment type="subcellular location">
    <subcellularLocation>
        <location evidence="5">Nucleus</location>
    </subcellularLocation>
</comment>
<comment type="tissue specificity">
    <text evidence="4">Highly expressed in heart and weakly expressed in brain, spleen, lung, liver, kidney and testis.</text>
</comment>
<comment type="similarity">
    <text evidence="5">Belongs to the Mediator complex subunit 13 family.</text>
</comment>
<comment type="sequence caution" evidence="5">
    <conflict type="frameshift">
        <sequence resource="EMBL-CDS" id="AAR08419"/>
    </conflict>
</comment>
<evidence type="ECO:0000250" key="1"/>
<evidence type="ECO:0000250" key="2">
    <source>
        <dbReference type="UniProtKB" id="Q71F56"/>
    </source>
</evidence>
<evidence type="ECO:0000256" key="3">
    <source>
        <dbReference type="SAM" id="MobiDB-lite"/>
    </source>
</evidence>
<evidence type="ECO:0000269" key="4">
    <source>
    </source>
</evidence>
<evidence type="ECO:0000305" key="5"/>
<sequence>MTAAANWVANGASLEDCHSNLFSLAELTGIKWRRYNFGGHGDCGPIISAPAQDDPILLSFIRCLQANLLCVWRRDVKPDCKELWIFWWGDEPNLVGVIHHELQVVEEGLWENGLSYECRTLLFKAIHNLLERCLMDKNFVRIGKWFVRPYDKDEKPVNKSEHLSCAFTFFLHGESNVCTSVEIAQHQPIYLINEEHLHMAQSSPAPFQVLVSPYGLNGTLTGHAYKMSDPAARKLIEEWHCFYPMVLRKREEPREEAELGYDDDFPVAVEVIVGGVRMVYPSAFVLVSQNDIPVPQSGHGTVAQQGLGSVKDPSNCGMPLTPPTSPEQVVIGESGGVQSAASHLGSQDGGMSTMHSPKRSRKTPPKLHSHMVRRVWRECILSRAQSKRSQMSTPTREEEAAHSPAAWDFVDPTQRVSCSCSRHKLLKRCAVGPSRPPAISQPGFSAGLPSSSSLPPPASSKHKTTERQEKGDKLQKRPLVPFHHRPSVAEELCVEQDAPGQKLGLAGIDASLEVSNTRKYDKQMAVPSRNTSKQMNLNPMDSPHSPISPLPPTLSPQPRGQEAESLDPPSVPVNPALYGNGLDLQQLSTIEDRTVLVGQRLPLMAEASETALYSGLRPSYTESSDRWWQSFRLPSSEDAEFRPPELQGERFDTALDLNPESTALQRLLAQPNKRFKIWQDEQPQVQPLPFLDPSPLSQQPGDTLGEVNDPYTFEDGDIKYIFTANKKCKQGTEKDSLKKNKSEDGFGTKDVTTPGHSTPVPDGKNAMSIFSSATKTDVRQDSAAGRAGSGSLTQVTDLAPSLHDLDNIFDNSDDDELGAVSPALRSSKMPTVGTEERPPGKDGRAAGPYPPTVADLQRMFPTPPSLEQHPAFSPVMNYKDGVSSETVTALGMMESPVVSMVPTHLTEFRMEVEDGLGSPKPEEIKDFSYVHKVPQFQPFVGSSMFAPLKTLPSHCLLPLKTPDACLFRPSWAVPPKMEQLPMPPAASSIRDGYNNVPSVGSLADPDYVNTPQMNTPVTLNSAAPASNSGAGVLPSPATPRFSVPTPRTPRTPRTPRGGGTASGQGSVKYDSTDQGSPASTPSTTRPLNSVEPATMQPIPEAHSLYVTLILSDSVMNVFKDRNFDSCCICACNMNIKGADVGLYIPDSSKEDQYRCTCGFSAIVNRKLGYNSGLFLEDELDIFGKNSDIGQAAERRLMMCQSSGQSTLLPQVEGARKAPEPPVSLLLLLQNQHTQPFASLSFLDYISSANRHALPCVSWTYDRVQADNNDYWTECFNALEQGRQYVDNPTGGKVDEALVRSATVHCWPHSNVLDTSMLSSQDVVRMLLSLQPFLQDAIQKKRTGRTWENIQHVQGPLTWQQFHKMAGRGTYGSEESPEPLPIPTLLVGYDKEFLTISPFSLPFWERLLLEPYGGHRDVAYIVVCPENEALLEGAKTFFRDLSAVYEMCRLGQHKPICKVLRDGIMRVGKTVAQKLTEELVSEWFNQPWSSEESDNHSRLKLYAQVCRHHLAPYLATLQLDSGLLMPPKHQSPPAEAQGQATPGNAGSLPSNSGSGAPPAGSAFNPTSSSSANPTTSSSSASSGPPGSSAASAPGITQMNTTSSSGFGGGVGGQNPSAGGSSTDRTPGNVACGDTEPGQSCTQSSQDGQDSVTERERIGIPTEPDSADSHAYPPAVVIYMVDPFTYTAEEDSSSGNFWLLSLMRCYTEMLDHLPEHMRSSFILQIVPCQYMLQTMKDEHVFYIQYLKSMAFSVYCQCRRPLPTQIHIKSLTGFGPAASIEMTLKNPERPSPIQLYSPPFILAPIKDKQTEPGETFGEASQKYNVLFVGYCLSHDQRWLLASCTDLHGELLETCVVNIALPSRSRKSKVSARKVGLQKLWEWCLGIVQMTSLPWRVVIGRLGRLGHGELKDWSILLGECSLQTISKQLKDVCRMCGISAADSPSILSACLVAMEPQGSFVVMPDAVTMGSVFGRSTALNMQSSQLNTPQDASCTHILVFPTSSTIQVAPANYPNEDGFSPNNDDMFVDLPFPDDMDNDIGILMTGNLHSSPNSSPVPSPGSPSGIGVGSHFQHSRSQGERLLSREAPEELKQQPLALGYFVSTAKAENLPQWFWSSCPQARNQCPLFLKASLHHHISVAQTDELLPARTSQRAPHPLDSKTTSDVLRFVLEQYNALSWLTCNPATQDRTSCLPVHFVVLTQLYNAIMNML</sequence>
<reference key="1">
    <citation type="journal article" date="2004" name="Gene">
        <title>cDNA cloning and characterization of the human THRAP2 gene which maps to chromosome 12q24, and its mouse ortholog Thrap2.</title>
        <authorList>
            <person name="Musante L."/>
            <person name="Bartsch O."/>
            <person name="Ropers H.-H."/>
            <person name="Kalscheuer V.M."/>
        </authorList>
    </citation>
    <scope>NUCLEOTIDE SEQUENCE [MRNA]</scope>
    <scope>TISSUE SPECIFICITY</scope>
</reference>
<reference key="2">
    <citation type="journal article" date="2005" name="Science">
        <title>The transcriptional landscape of the mammalian genome.</title>
        <authorList>
            <person name="Carninci P."/>
            <person name="Kasukawa T."/>
            <person name="Katayama S."/>
            <person name="Gough J."/>
            <person name="Frith M.C."/>
            <person name="Maeda N."/>
            <person name="Oyama R."/>
            <person name="Ravasi T."/>
            <person name="Lenhard B."/>
            <person name="Wells C."/>
            <person name="Kodzius R."/>
            <person name="Shimokawa K."/>
            <person name="Bajic V.B."/>
            <person name="Brenner S.E."/>
            <person name="Batalov S."/>
            <person name="Forrest A.R."/>
            <person name="Zavolan M."/>
            <person name="Davis M.J."/>
            <person name="Wilming L.G."/>
            <person name="Aidinis V."/>
            <person name="Allen J.E."/>
            <person name="Ambesi-Impiombato A."/>
            <person name="Apweiler R."/>
            <person name="Aturaliya R.N."/>
            <person name="Bailey T.L."/>
            <person name="Bansal M."/>
            <person name="Baxter L."/>
            <person name="Beisel K.W."/>
            <person name="Bersano T."/>
            <person name="Bono H."/>
            <person name="Chalk A.M."/>
            <person name="Chiu K.P."/>
            <person name="Choudhary V."/>
            <person name="Christoffels A."/>
            <person name="Clutterbuck D.R."/>
            <person name="Crowe M.L."/>
            <person name="Dalla E."/>
            <person name="Dalrymple B.P."/>
            <person name="de Bono B."/>
            <person name="Della Gatta G."/>
            <person name="di Bernardo D."/>
            <person name="Down T."/>
            <person name="Engstrom P."/>
            <person name="Fagiolini M."/>
            <person name="Faulkner G."/>
            <person name="Fletcher C.F."/>
            <person name="Fukushima T."/>
            <person name="Furuno M."/>
            <person name="Futaki S."/>
            <person name="Gariboldi M."/>
            <person name="Georgii-Hemming P."/>
            <person name="Gingeras T.R."/>
            <person name="Gojobori T."/>
            <person name="Green R.E."/>
            <person name="Gustincich S."/>
            <person name="Harbers M."/>
            <person name="Hayashi Y."/>
            <person name="Hensch T.K."/>
            <person name="Hirokawa N."/>
            <person name="Hill D."/>
            <person name="Huminiecki L."/>
            <person name="Iacono M."/>
            <person name="Ikeo K."/>
            <person name="Iwama A."/>
            <person name="Ishikawa T."/>
            <person name="Jakt M."/>
            <person name="Kanapin A."/>
            <person name="Katoh M."/>
            <person name="Kawasawa Y."/>
            <person name="Kelso J."/>
            <person name="Kitamura H."/>
            <person name="Kitano H."/>
            <person name="Kollias G."/>
            <person name="Krishnan S.P."/>
            <person name="Kruger A."/>
            <person name="Kummerfeld S.K."/>
            <person name="Kurochkin I.V."/>
            <person name="Lareau L.F."/>
            <person name="Lazarevic D."/>
            <person name="Lipovich L."/>
            <person name="Liu J."/>
            <person name="Liuni S."/>
            <person name="McWilliam S."/>
            <person name="Madan Babu M."/>
            <person name="Madera M."/>
            <person name="Marchionni L."/>
            <person name="Matsuda H."/>
            <person name="Matsuzawa S."/>
            <person name="Miki H."/>
            <person name="Mignone F."/>
            <person name="Miyake S."/>
            <person name="Morris K."/>
            <person name="Mottagui-Tabar S."/>
            <person name="Mulder N."/>
            <person name="Nakano N."/>
            <person name="Nakauchi H."/>
            <person name="Ng P."/>
            <person name="Nilsson R."/>
            <person name="Nishiguchi S."/>
            <person name="Nishikawa S."/>
            <person name="Nori F."/>
            <person name="Ohara O."/>
            <person name="Okazaki Y."/>
            <person name="Orlando V."/>
            <person name="Pang K.C."/>
            <person name="Pavan W.J."/>
            <person name="Pavesi G."/>
            <person name="Pesole G."/>
            <person name="Petrovsky N."/>
            <person name="Piazza S."/>
            <person name="Reed J."/>
            <person name="Reid J.F."/>
            <person name="Ring B.Z."/>
            <person name="Ringwald M."/>
            <person name="Rost B."/>
            <person name="Ruan Y."/>
            <person name="Salzberg S.L."/>
            <person name="Sandelin A."/>
            <person name="Schneider C."/>
            <person name="Schoenbach C."/>
            <person name="Sekiguchi K."/>
            <person name="Semple C.A."/>
            <person name="Seno S."/>
            <person name="Sessa L."/>
            <person name="Sheng Y."/>
            <person name="Shibata Y."/>
            <person name="Shimada H."/>
            <person name="Shimada K."/>
            <person name="Silva D."/>
            <person name="Sinclair B."/>
            <person name="Sperling S."/>
            <person name="Stupka E."/>
            <person name="Sugiura K."/>
            <person name="Sultana R."/>
            <person name="Takenaka Y."/>
            <person name="Taki K."/>
            <person name="Tammoja K."/>
            <person name="Tan S.L."/>
            <person name="Tang S."/>
            <person name="Taylor M.S."/>
            <person name="Tegner J."/>
            <person name="Teichmann S.A."/>
            <person name="Ueda H.R."/>
            <person name="van Nimwegen E."/>
            <person name="Verardo R."/>
            <person name="Wei C.L."/>
            <person name="Yagi K."/>
            <person name="Yamanishi H."/>
            <person name="Zabarovsky E."/>
            <person name="Zhu S."/>
            <person name="Zimmer A."/>
            <person name="Hide W."/>
            <person name="Bult C."/>
            <person name="Grimmond S.M."/>
            <person name="Teasdale R.D."/>
            <person name="Liu E.T."/>
            <person name="Brusic V."/>
            <person name="Quackenbush J."/>
            <person name="Wahlestedt C."/>
            <person name="Mattick J.S."/>
            <person name="Hume D.A."/>
            <person name="Kai C."/>
            <person name="Sasaki D."/>
            <person name="Tomaru Y."/>
            <person name="Fukuda S."/>
            <person name="Kanamori-Katayama M."/>
            <person name="Suzuki M."/>
            <person name="Aoki J."/>
            <person name="Arakawa T."/>
            <person name="Iida J."/>
            <person name="Imamura K."/>
            <person name="Itoh M."/>
            <person name="Kato T."/>
            <person name="Kawaji H."/>
            <person name="Kawagashira N."/>
            <person name="Kawashima T."/>
            <person name="Kojima M."/>
            <person name="Kondo S."/>
            <person name="Konno H."/>
            <person name="Nakano K."/>
            <person name="Ninomiya N."/>
            <person name="Nishio T."/>
            <person name="Okada M."/>
            <person name="Plessy C."/>
            <person name="Shibata K."/>
            <person name="Shiraki T."/>
            <person name="Suzuki S."/>
            <person name="Tagami M."/>
            <person name="Waki K."/>
            <person name="Watahiki A."/>
            <person name="Okamura-Oho Y."/>
            <person name="Suzuki H."/>
            <person name="Kawai J."/>
            <person name="Hayashizaki Y."/>
        </authorList>
    </citation>
    <scope>NUCLEOTIDE SEQUENCE [LARGE SCALE MRNA] OF 1-465 AND 1846-2207</scope>
    <source>
        <strain>NOD</strain>
    </source>
</reference>
<reference key="3">
    <citation type="journal article" date="2003" name="DNA Res.">
        <title>Prediction of the coding sequences of mouse homologues of KIAA gene: II. The complete nucleotide sequences of 400 mouse KIAA-homologous cDNAs identified by screening of terminal sequences of cDNA clones randomly sampled from size-fractionated libraries.</title>
        <authorList>
            <person name="Okazaki N."/>
            <person name="Kikuno R."/>
            <person name="Ohara R."/>
            <person name="Inamoto S."/>
            <person name="Aizawa H."/>
            <person name="Yuasa S."/>
            <person name="Nakajima D."/>
            <person name="Nagase T."/>
            <person name="Ohara O."/>
            <person name="Koga H."/>
        </authorList>
    </citation>
    <scope>NUCLEOTIDE SEQUENCE [LARGE SCALE MRNA] OF 550-2207</scope>
    <source>
        <tissue>Brain</tissue>
    </source>
</reference>
<reference key="4">
    <citation type="journal article" date="2004" name="Genome Res.">
        <title>The status, quality, and expansion of the NIH full-length cDNA project: the Mammalian Gene Collection (MGC).</title>
        <authorList>
            <consortium name="The MGC Project Team"/>
        </authorList>
    </citation>
    <scope>NUCLEOTIDE SEQUENCE [LARGE SCALE MRNA] OF 1083-2207</scope>
    <source>
        <strain>C57BL/6J</strain>
        <tissue>Brain</tissue>
        <tissue>Eye</tissue>
    </source>
</reference>
<reference key="5">
    <citation type="journal article" date="2010" name="Cell">
        <title>A tissue-specific atlas of mouse protein phosphorylation and expression.</title>
        <authorList>
            <person name="Huttlin E.L."/>
            <person name="Jedrychowski M.P."/>
            <person name="Elias J.E."/>
            <person name="Goswami T."/>
            <person name="Rad R."/>
            <person name="Beausoleil S.A."/>
            <person name="Villen J."/>
            <person name="Haas W."/>
            <person name="Sowa M.E."/>
            <person name="Gygi S.P."/>
        </authorList>
    </citation>
    <scope>IDENTIFICATION BY MASS SPECTROMETRY [LARGE SCALE ANALYSIS]</scope>
    <source>
        <tissue>Kidney</tissue>
    </source>
</reference>
<gene>
    <name type="primary">Med13l</name>
    <name type="synonym">Kiaa1025</name>
    <name type="synonym">Thrap2</name>
    <name type="synonym">Trap240l</name>
</gene>
<feature type="chain" id="PRO_0000076353" description="Mediator of RNA polymerase II transcription subunit 13-like">
    <location>
        <begin position="1"/>
        <end position="2207"/>
    </location>
</feature>
<feature type="region of interest" description="Disordered" evidence="3">
    <location>
        <begin position="337"/>
        <end position="368"/>
    </location>
</feature>
<feature type="region of interest" description="Disordered" evidence="3">
    <location>
        <begin position="384"/>
        <end position="403"/>
    </location>
</feature>
<feature type="region of interest" description="Disordered" evidence="3">
    <location>
        <begin position="431"/>
        <end position="479"/>
    </location>
</feature>
<feature type="region of interest" description="Disordered" evidence="3">
    <location>
        <begin position="519"/>
        <end position="574"/>
    </location>
</feature>
<feature type="region of interest" description="Disordered" evidence="3">
    <location>
        <begin position="731"/>
        <end position="767"/>
    </location>
</feature>
<feature type="region of interest" description="Disordered" evidence="3">
    <location>
        <begin position="816"/>
        <end position="847"/>
    </location>
</feature>
<feature type="region of interest" description="Disordered" evidence="3">
    <location>
        <begin position="1004"/>
        <end position="1091"/>
    </location>
</feature>
<feature type="region of interest" description="Leucine-zipper">
    <location>
        <begin position="1379"/>
        <end position="1400"/>
    </location>
</feature>
<feature type="region of interest" description="Disordered" evidence="3">
    <location>
        <begin position="1523"/>
        <end position="1652"/>
    </location>
</feature>
<feature type="region of interest" description="Disordered" evidence="3">
    <location>
        <begin position="2042"/>
        <end position="2077"/>
    </location>
</feature>
<feature type="short sequence motif" description="LXXLL motif 1">
    <location>
        <begin position="664"/>
        <end position="668"/>
    </location>
</feature>
<feature type="short sequence motif" description="LXXLL motif 2">
    <location>
        <begin position="1224"/>
        <end position="1228"/>
    </location>
</feature>
<feature type="compositionally biased region" description="Polar residues" evidence="3">
    <location>
        <begin position="337"/>
        <end position="355"/>
    </location>
</feature>
<feature type="compositionally biased region" description="Basic residues" evidence="3">
    <location>
        <begin position="356"/>
        <end position="368"/>
    </location>
</feature>
<feature type="compositionally biased region" description="Polar residues" evidence="3">
    <location>
        <begin position="384"/>
        <end position="394"/>
    </location>
</feature>
<feature type="compositionally biased region" description="Low complexity" evidence="3">
    <location>
        <begin position="442"/>
        <end position="453"/>
    </location>
</feature>
<feature type="compositionally biased region" description="Basic and acidic residues" evidence="3">
    <location>
        <begin position="463"/>
        <end position="475"/>
    </location>
</feature>
<feature type="compositionally biased region" description="Polar residues" evidence="3">
    <location>
        <begin position="528"/>
        <end position="539"/>
    </location>
</feature>
<feature type="compositionally biased region" description="Pro residues" evidence="3">
    <location>
        <begin position="546"/>
        <end position="555"/>
    </location>
</feature>
<feature type="compositionally biased region" description="Basic and acidic residues" evidence="3">
    <location>
        <begin position="731"/>
        <end position="747"/>
    </location>
</feature>
<feature type="compositionally biased region" description="Basic and acidic residues" evidence="3">
    <location>
        <begin position="834"/>
        <end position="844"/>
    </location>
</feature>
<feature type="compositionally biased region" description="Polar residues" evidence="3">
    <location>
        <begin position="1009"/>
        <end position="1019"/>
    </location>
</feature>
<feature type="compositionally biased region" description="Low complexity" evidence="3">
    <location>
        <begin position="1020"/>
        <end position="1031"/>
    </location>
</feature>
<feature type="compositionally biased region" description="Polar residues" evidence="3">
    <location>
        <begin position="1072"/>
        <end position="1087"/>
    </location>
</feature>
<feature type="compositionally biased region" description="Low complexity" evidence="3">
    <location>
        <begin position="1541"/>
        <end position="1593"/>
    </location>
</feature>
<feature type="compositionally biased region" description="Polar residues" evidence="3">
    <location>
        <begin position="1612"/>
        <end position="1624"/>
    </location>
</feature>
<feature type="compositionally biased region" description="Polar residues" evidence="3">
    <location>
        <begin position="1635"/>
        <end position="1649"/>
    </location>
</feature>
<feature type="modified residue" description="Phosphoserine" evidence="2">
    <location>
        <position position="548"/>
    </location>
</feature>
<feature type="modified residue" description="Phosphoserine" evidence="2">
    <location>
        <position position="555"/>
    </location>
</feature>
<feature type="modified residue" description="Phosphoserine" evidence="2">
    <location>
        <position position="812"/>
    </location>
</feature>
<feature type="modified residue" description="Phosphoserine" evidence="2">
    <location>
        <position position="821"/>
    </location>
</feature>
<feature type="modified residue" description="Phosphoserine" evidence="2">
    <location>
        <position position="918"/>
    </location>
</feature>
<feature type="modified residue" description="Phosphoserine" evidence="2">
    <location>
        <position position="2080"/>
    </location>
</feature>
<feature type="sequence conflict" description="In Ref. 3; BAC65701." evidence="5" ref="3">
    <original>T</original>
    <variation>M</variation>
    <location>
        <position position="950"/>
    </location>
</feature>
<feature type="sequence conflict" description="In Ref. 3; BAC65701." evidence="5" ref="3">
    <original>V</original>
    <variation>L</variation>
    <location>
        <position position="1008"/>
    </location>
</feature>
<feature type="sequence conflict" description="In Ref. 3; BAC65701." evidence="5" ref="3">
    <original>V</original>
    <variation>I</variation>
    <location>
        <position position="1222"/>
    </location>
</feature>
<protein>
    <recommendedName>
        <fullName>Mediator of RNA polymerase II transcription subunit 13-like</fullName>
    </recommendedName>
    <alternativeName>
        <fullName>Mediator complex subunit 13-like</fullName>
    </alternativeName>
    <alternativeName>
        <fullName>Thyroid hormone receptor-associated protein 2</fullName>
    </alternativeName>
    <alternativeName>
        <fullName>Thyroid hormone receptor-associated protein complex 240 kDa component-like</fullName>
    </alternativeName>
</protein>
<keyword id="KW-0010">Activator</keyword>
<keyword id="KW-0539">Nucleus</keyword>
<keyword id="KW-0597">Phosphoprotein</keyword>
<keyword id="KW-1185">Reference proteome</keyword>
<keyword id="KW-0677">Repeat</keyword>
<keyword id="KW-0678">Repressor</keyword>
<keyword id="KW-0804">Transcription</keyword>
<keyword id="KW-0805">Transcription regulation</keyword>
<accession>Q6JPI3</accession>
<accession>Q3TRF4</accession>
<accession>Q3UQI8</accession>
<accession>Q80TM3</accession>
<accession>Q80WQ0</accession>
<name>MD13L_MOUSE</name>
<proteinExistence type="evidence at protein level"/>